<sequence length="53" mass="6323">MAIKKSIRLECGECKEINYLTFKNAKKHPEKLELNKYCKRCRSAKPHKETKKK</sequence>
<feature type="chain" id="PRO_0000356577" description="Large ribosomal subunit protein bL33">
    <location>
        <begin position="1"/>
        <end position="53"/>
    </location>
</feature>
<accession>Q8EW17</accession>
<proteinExistence type="inferred from homology"/>
<keyword id="KW-1185">Reference proteome</keyword>
<keyword id="KW-0687">Ribonucleoprotein</keyword>
<keyword id="KW-0689">Ribosomal protein</keyword>
<dbReference type="EMBL" id="BA000026">
    <property type="protein sequence ID" value="BAC44179.1"/>
    <property type="status" value="ALT_INIT"/>
    <property type="molecule type" value="Genomic_DNA"/>
</dbReference>
<dbReference type="RefSeq" id="WP_011077215.1">
    <property type="nucleotide sequence ID" value="NC_004432.1"/>
</dbReference>
<dbReference type="SMR" id="Q8EW17"/>
<dbReference type="FunCoup" id="Q8EW17">
    <property type="interactions" value="102"/>
</dbReference>
<dbReference type="STRING" id="272633.gene:10731505"/>
<dbReference type="KEGG" id="mpe:MYPE3900"/>
<dbReference type="eggNOG" id="COG0267">
    <property type="taxonomic scope" value="Bacteria"/>
</dbReference>
<dbReference type="HOGENOM" id="CLU_190949_0_2_14"/>
<dbReference type="InParanoid" id="Q8EW17"/>
<dbReference type="Proteomes" id="UP000002522">
    <property type="component" value="Chromosome"/>
</dbReference>
<dbReference type="GO" id="GO:0005737">
    <property type="term" value="C:cytoplasm"/>
    <property type="evidence" value="ECO:0007669"/>
    <property type="project" value="UniProtKB-ARBA"/>
</dbReference>
<dbReference type="GO" id="GO:1990904">
    <property type="term" value="C:ribonucleoprotein complex"/>
    <property type="evidence" value="ECO:0007669"/>
    <property type="project" value="UniProtKB-KW"/>
</dbReference>
<dbReference type="GO" id="GO:0005840">
    <property type="term" value="C:ribosome"/>
    <property type="evidence" value="ECO:0007669"/>
    <property type="project" value="UniProtKB-KW"/>
</dbReference>
<dbReference type="GO" id="GO:0003735">
    <property type="term" value="F:structural constituent of ribosome"/>
    <property type="evidence" value="ECO:0007669"/>
    <property type="project" value="InterPro"/>
</dbReference>
<dbReference type="GO" id="GO:0006412">
    <property type="term" value="P:translation"/>
    <property type="evidence" value="ECO:0007669"/>
    <property type="project" value="UniProtKB-UniRule"/>
</dbReference>
<dbReference type="Gene3D" id="2.20.28.120">
    <property type="entry name" value="Ribosomal protein L33"/>
    <property type="match status" value="1"/>
</dbReference>
<dbReference type="HAMAP" id="MF_00294">
    <property type="entry name" value="Ribosomal_bL33"/>
    <property type="match status" value="1"/>
</dbReference>
<dbReference type="InterPro" id="IPR001705">
    <property type="entry name" value="Ribosomal_bL33"/>
</dbReference>
<dbReference type="InterPro" id="IPR018264">
    <property type="entry name" value="Ribosomal_bL33_CS"/>
</dbReference>
<dbReference type="InterPro" id="IPR038584">
    <property type="entry name" value="Ribosomal_bL33_sf"/>
</dbReference>
<dbReference type="InterPro" id="IPR011332">
    <property type="entry name" value="Ribosomal_zn-bd"/>
</dbReference>
<dbReference type="NCBIfam" id="NF001764">
    <property type="entry name" value="PRK00504.1"/>
    <property type="match status" value="1"/>
</dbReference>
<dbReference type="NCBIfam" id="NF001860">
    <property type="entry name" value="PRK00595.1"/>
    <property type="match status" value="1"/>
</dbReference>
<dbReference type="NCBIfam" id="TIGR01023">
    <property type="entry name" value="rpmG_bact"/>
    <property type="match status" value="1"/>
</dbReference>
<dbReference type="Pfam" id="PF00471">
    <property type="entry name" value="Ribosomal_L33"/>
    <property type="match status" value="1"/>
</dbReference>
<dbReference type="SUPFAM" id="SSF57829">
    <property type="entry name" value="Zn-binding ribosomal proteins"/>
    <property type="match status" value="1"/>
</dbReference>
<dbReference type="PROSITE" id="PS00582">
    <property type="entry name" value="RIBOSOMAL_L33"/>
    <property type="match status" value="1"/>
</dbReference>
<gene>
    <name evidence="1" type="primary">rpmG</name>
    <name type="ordered locus">MYPE3900</name>
</gene>
<comment type="similarity">
    <text evidence="1">Belongs to the bacterial ribosomal protein bL33 family.</text>
</comment>
<comment type="sequence caution" evidence="2">
    <conflict type="erroneous initiation">
        <sequence resource="EMBL-CDS" id="BAC44179"/>
    </conflict>
</comment>
<name>RL33_MALP2</name>
<evidence type="ECO:0000255" key="1">
    <source>
        <dbReference type="HAMAP-Rule" id="MF_00294"/>
    </source>
</evidence>
<evidence type="ECO:0000305" key="2"/>
<organism>
    <name type="scientific">Malacoplasma penetrans (strain HF-2)</name>
    <name type="common">Mycoplasma penetrans</name>
    <dbReference type="NCBI Taxonomy" id="272633"/>
    <lineage>
        <taxon>Bacteria</taxon>
        <taxon>Bacillati</taxon>
        <taxon>Mycoplasmatota</taxon>
        <taxon>Mycoplasmoidales</taxon>
        <taxon>Mycoplasmoidaceae</taxon>
        <taxon>Malacoplasma</taxon>
    </lineage>
</organism>
<protein>
    <recommendedName>
        <fullName evidence="1">Large ribosomal subunit protein bL33</fullName>
    </recommendedName>
    <alternativeName>
        <fullName evidence="2">50S ribosomal protein L33</fullName>
    </alternativeName>
</protein>
<reference key="1">
    <citation type="journal article" date="2002" name="Nucleic Acids Res.">
        <title>The complete genomic sequence of Mycoplasma penetrans, an intracellular bacterial pathogen in humans.</title>
        <authorList>
            <person name="Sasaki Y."/>
            <person name="Ishikawa J."/>
            <person name="Yamashita A."/>
            <person name="Oshima K."/>
            <person name="Kenri T."/>
            <person name="Furuya K."/>
            <person name="Yoshino C."/>
            <person name="Horino A."/>
            <person name="Shiba T."/>
            <person name="Sasaki T."/>
            <person name="Hattori M."/>
        </authorList>
    </citation>
    <scope>NUCLEOTIDE SEQUENCE [LARGE SCALE GENOMIC DNA]</scope>
    <source>
        <strain>HF-2</strain>
    </source>
</reference>